<feature type="chain" id="PRO_0000126910" description="Phenylalanine--tRNA ligase beta subunit">
    <location>
        <begin position="1"/>
        <end position="791"/>
    </location>
</feature>
<feature type="domain" description="tRNA-binding" evidence="1">
    <location>
        <begin position="39"/>
        <end position="148"/>
    </location>
</feature>
<feature type="domain" description="B5" evidence="1">
    <location>
        <begin position="401"/>
        <end position="476"/>
    </location>
</feature>
<feature type="domain" description="FDX-ACB" evidence="1">
    <location>
        <begin position="697"/>
        <end position="790"/>
    </location>
</feature>
<feature type="binding site" evidence="1">
    <location>
        <position position="454"/>
    </location>
    <ligand>
        <name>Mg(2+)</name>
        <dbReference type="ChEBI" id="CHEBI:18420"/>
        <note>shared with alpha subunit</note>
    </ligand>
</feature>
<feature type="binding site" evidence="1">
    <location>
        <position position="460"/>
    </location>
    <ligand>
        <name>Mg(2+)</name>
        <dbReference type="ChEBI" id="CHEBI:18420"/>
        <note>shared with alpha subunit</note>
    </ligand>
</feature>
<feature type="binding site" evidence="1">
    <location>
        <position position="463"/>
    </location>
    <ligand>
        <name>Mg(2+)</name>
        <dbReference type="ChEBI" id="CHEBI:18420"/>
        <note>shared with alpha subunit</note>
    </ligand>
</feature>
<feature type="binding site" evidence="1">
    <location>
        <position position="464"/>
    </location>
    <ligand>
        <name>Mg(2+)</name>
        <dbReference type="ChEBI" id="CHEBI:18420"/>
        <note>shared with alpha subunit</note>
    </ligand>
</feature>
<dbReference type="EC" id="6.1.1.20" evidence="1"/>
<dbReference type="EMBL" id="AE017282">
    <property type="protein sequence ID" value="AAU93164.1"/>
    <property type="molecule type" value="Genomic_DNA"/>
</dbReference>
<dbReference type="RefSeq" id="WP_010960036.1">
    <property type="nucleotide sequence ID" value="NC_002977.6"/>
</dbReference>
<dbReference type="SMR" id="Q60AY9"/>
<dbReference type="STRING" id="243233.MCA0698"/>
<dbReference type="GeneID" id="88223018"/>
<dbReference type="KEGG" id="mca:MCA0698"/>
<dbReference type="eggNOG" id="COG0072">
    <property type="taxonomic scope" value="Bacteria"/>
</dbReference>
<dbReference type="eggNOG" id="COG0073">
    <property type="taxonomic scope" value="Bacteria"/>
</dbReference>
<dbReference type="HOGENOM" id="CLU_016891_0_0_6"/>
<dbReference type="Proteomes" id="UP000006821">
    <property type="component" value="Chromosome"/>
</dbReference>
<dbReference type="GO" id="GO:0009328">
    <property type="term" value="C:phenylalanine-tRNA ligase complex"/>
    <property type="evidence" value="ECO:0007669"/>
    <property type="project" value="TreeGrafter"/>
</dbReference>
<dbReference type="GO" id="GO:0005524">
    <property type="term" value="F:ATP binding"/>
    <property type="evidence" value="ECO:0007669"/>
    <property type="project" value="UniProtKB-UniRule"/>
</dbReference>
<dbReference type="GO" id="GO:0000287">
    <property type="term" value="F:magnesium ion binding"/>
    <property type="evidence" value="ECO:0007669"/>
    <property type="project" value="UniProtKB-UniRule"/>
</dbReference>
<dbReference type="GO" id="GO:0004826">
    <property type="term" value="F:phenylalanine-tRNA ligase activity"/>
    <property type="evidence" value="ECO:0007669"/>
    <property type="project" value="UniProtKB-UniRule"/>
</dbReference>
<dbReference type="GO" id="GO:0000049">
    <property type="term" value="F:tRNA binding"/>
    <property type="evidence" value="ECO:0007669"/>
    <property type="project" value="UniProtKB-KW"/>
</dbReference>
<dbReference type="GO" id="GO:0006432">
    <property type="term" value="P:phenylalanyl-tRNA aminoacylation"/>
    <property type="evidence" value="ECO:0007669"/>
    <property type="project" value="UniProtKB-UniRule"/>
</dbReference>
<dbReference type="CDD" id="cd00769">
    <property type="entry name" value="PheRS_beta_core"/>
    <property type="match status" value="1"/>
</dbReference>
<dbReference type="CDD" id="cd02796">
    <property type="entry name" value="tRNA_bind_bactPheRS"/>
    <property type="match status" value="1"/>
</dbReference>
<dbReference type="FunFam" id="2.40.50.140:FF:000045">
    <property type="entry name" value="Phenylalanine--tRNA ligase beta subunit"/>
    <property type="match status" value="1"/>
</dbReference>
<dbReference type="FunFam" id="3.30.56.10:FF:000002">
    <property type="entry name" value="Phenylalanine--tRNA ligase beta subunit"/>
    <property type="match status" value="1"/>
</dbReference>
<dbReference type="FunFam" id="3.30.70.380:FF:000001">
    <property type="entry name" value="Phenylalanine--tRNA ligase beta subunit"/>
    <property type="match status" value="1"/>
</dbReference>
<dbReference type="FunFam" id="3.30.930.10:FF:000022">
    <property type="entry name" value="Phenylalanine--tRNA ligase beta subunit"/>
    <property type="match status" value="1"/>
</dbReference>
<dbReference type="FunFam" id="3.50.40.10:FF:000001">
    <property type="entry name" value="Phenylalanine--tRNA ligase beta subunit"/>
    <property type="match status" value="1"/>
</dbReference>
<dbReference type="Gene3D" id="3.30.56.10">
    <property type="match status" value="2"/>
</dbReference>
<dbReference type="Gene3D" id="3.30.930.10">
    <property type="entry name" value="Bira Bifunctional Protein, Domain 2"/>
    <property type="match status" value="1"/>
</dbReference>
<dbReference type="Gene3D" id="3.30.70.380">
    <property type="entry name" value="Ferrodoxin-fold anticodon-binding domain"/>
    <property type="match status" value="1"/>
</dbReference>
<dbReference type="Gene3D" id="2.40.50.140">
    <property type="entry name" value="Nucleic acid-binding proteins"/>
    <property type="match status" value="1"/>
</dbReference>
<dbReference type="Gene3D" id="3.50.40.10">
    <property type="entry name" value="Phenylalanyl-trna Synthetase, Chain B, domain 3"/>
    <property type="match status" value="1"/>
</dbReference>
<dbReference type="HAMAP" id="MF_00283">
    <property type="entry name" value="Phe_tRNA_synth_beta1"/>
    <property type="match status" value="1"/>
</dbReference>
<dbReference type="InterPro" id="IPR045864">
    <property type="entry name" value="aa-tRNA-synth_II/BPL/LPL"/>
</dbReference>
<dbReference type="InterPro" id="IPR005146">
    <property type="entry name" value="B3/B4_tRNA-bd"/>
</dbReference>
<dbReference type="InterPro" id="IPR009061">
    <property type="entry name" value="DNA-bd_dom_put_sf"/>
</dbReference>
<dbReference type="InterPro" id="IPR005121">
    <property type="entry name" value="Fdx_antiC-bd"/>
</dbReference>
<dbReference type="InterPro" id="IPR036690">
    <property type="entry name" value="Fdx_antiC-bd_sf"/>
</dbReference>
<dbReference type="InterPro" id="IPR012340">
    <property type="entry name" value="NA-bd_OB-fold"/>
</dbReference>
<dbReference type="InterPro" id="IPR045060">
    <property type="entry name" value="Phe-tRNA-ligase_IIc_bsu"/>
</dbReference>
<dbReference type="InterPro" id="IPR004532">
    <property type="entry name" value="Phe-tRNA-ligase_IIc_bsu_bact"/>
</dbReference>
<dbReference type="InterPro" id="IPR020825">
    <property type="entry name" value="Phe-tRNA_synthase-like_B3/B4"/>
</dbReference>
<dbReference type="InterPro" id="IPR041616">
    <property type="entry name" value="PheRS_beta_core"/>
</dbReference>
<dbReference type="InterPro" id="IPR002547">
    <property type="entry name" value="tRNA-bd_dom"/>
</dbReference>
<dbReference type="InterPro" id="IPR033714">
    <property type="entry name" value="tRNA_bind_bactPheRS"/>
</dbReference>
<dbReference type="InterPro" id="IPR005147">
    <property type="entry name" value="tRNA_synthase_B5-dom"/>
</dbReference>
<dbReference type="NCBIfam" id="TIGR00472">
    <property type="entry name" value="pheT_bact"/>
    <property type="match status" value="1"/>
</dbReference>
<dbReference type="NCBIfam" id="NF045760">
    <property type="entry name" value="YtpR"/>
    <property type="match status" value="1"/>
</dbReference>
<dbReference type="PANTHER" id="PTHR10947:SF0">
    <property type="entry name" value="PHENYLALANINE--TRNA LIGASE BETA SUBUNIT"/>
    <property type="match status" value="1"/>
</dbReference>
<dbReference type="PANTHER" id="PTHR10947">
    <property type="entry name" value="PHENYLALANYL-TRNA SYNTHETASE BETA CHAIN AND LEUCINE-RICH REPEAT-CONTAINING PROTEIN 47"/>
    <property type="match status" value="1"/>
</dbReference>
<dbReference type="Pfam" id="PF03483">
    <property type="entry name" value="B3_4"/>
    <property type="match status" value="1"/>
</dbReference>
<dbReference type="Pfam" id="PF03484">
    <property type="entry name" value="B5"/>
    <property type="match status" value="1"/>
</dbReference>
<dbReference type="Pfam" id="PF03147">
    <property type="entry name" value="FDX-ACB"/>
    <property type="match status" value="1"/>
</dbReference>
<dbReference type="Pfam" id="PF01588">
    <property type="entry name" value="tRNA_bind"/>
    <property type="match status" value="1"/>
</dbReference>
<dbReference type="Pfam" id="PF17759">
    <property type="entry name" value="tRNA_synthFbeta"/>
    <property type="match status" value="1"/>
</dbReference>
<dbReference type="SMART" id="SM00873">
    <property type="entry name" value="B3_4"/>
    <property type="match status" value="1"/>
</dbReference>
<dbReference type="SMART" id="SM00874">
    <property type="entry name" value="B5"/>
    <property type="match status" value="1"/>
</dbReference>
<dbReference type="SMART" id="SM00896">
    <property type="entry name" value="FDX-ACB"/>
    <property type="match status" value="1"/>
</dbReference>
<dbReference type="SUPFAM" id="SSF54991">
    <property type="entry name" value="Anticodon-binding domain of PheRS"/>
    <property type="match status" value="1"/>
</dbReference>
<dbReference type="SUPFAM" id="SSF55681">
    <property type="entry name" value="Class II aaRS and biotin synthetases"/>
    <property type="match status" value="1"/>
</dbReference>
<dbReference type="SUPFAM" id="SSF50249">
    <property type="entry name" value="Nucleic acid-binding proteins"/>
    <property type="match status" value="1"/>
</dbReference>
<dbReference type="SUPFAM" id="SSF56037">
    <property type="entry name" value="PheT/TilS domain"/>
    <property type="match status" value="1"/>
</dbReference>
<dbReference type="SUPFAM" id="SSF46955">
    <property type="entry name" value="Putative DNA-binding domain"/>
    <property type="match status" value="1"/>
</dbReference>
<dbReference type="PROSITE" id="PS51483">
    <property type="entry name" value="B5"/>
    <property type="match status" value="1"/>
</dbReference>
<dbReference type="PROSITE" id="PS51447">
    <property type="entry name" value="FDX_ACB"/>
    <property type="match status" value="1"/>
</dbReference>
<dbReference type="PROSITE" id="PS50886">
    <property type="entry name" value="TRBD"/>
    <property type="match status" value="1"/>
</dbReference>
<protein>
    <recommendedName>
        <fullName evidence="1">Phenylalanine--tRNA ligase beta subunit</fullName>
        <ecNumber evidence="1">6.1.1.20</ecNumber>
    </recommendedName>
    <alternativeName>
        <fullName evidence="1">Phenylalanyl-tRNA synthetase beta subunit</fullName>
        <shortName evidence="1">PheRS</shortName>
    </alternativeName>
</protein>
<keyword id="KW-0030">Aminoacyl-tRNA synthetase</keyword>
<keyword id="KW-0067">ATP-binding</keyword>
<keyword id="KW-0963">Cytoplasm</keyword>
<keyword id="KW-0436">Ligase</keyword>
<keyword id="KW-0460">Magnesium</keyword>
<keyword id="KW-0479">Metal-binding</keyword>
<keyword id="KW-0547">Nucleotide-binding</keyword>
<keyword id="KW-0648">Protein biosynthesis</keyword>
<keyword id="KW-1185">Reference proteome</keyword>
<keyword id="KW-0694">RNA-binding</keyword>
<keyword id="KW-0820">tRNA-binding</keyword>
<reference key="1">
    <citation type="journal article" date="2004" name="PLoS Biol.">
        <title>Genomic insights into methanotrophy: the complete genome sequence of Methylococcus capsulatus (Bath).</title>
        <authorList>
            <person name="Ward N.L."/>
            <person name="Larsen O."/>
            <person name="Sakwa J."/>
            <person name="Bruseth L."/>
            <person name="Khouri H.M."/>
            <person name="Durkin A.S."/>
            <person name="Dimitrov G."/>
            <person name="Jiang L."/>
            <person name="Scanlan D."/>
            <person name="Kang K.H."/>
            <person name="Lewis M.R."/>
            <person name="Nelson K.E."/>
            <person name="Methe B.A."/>
            <person name="Wu M."/>
            <person name="Heidelberg J.F."/>
            <person name="Paulsen I.T."/>
            <person name="Fouts D.E."/>
            <person name="Ravel J."/>
            <person name="Tettelin H."/>
            <person name="Ren Q."/>
            <person name="Read T.D."/>
            <person name="DeBoy R.T."/>
            <person name="Seshadri R."/>
            <person name="Salzberg S.L."/>
            <person name="Jensen H.B."/>
            <person name="Birkeland N.K."/>
            <person name="Nelson W.C."/>
            <person name="Dodson R.J."/>
            <person name="Grindhaug S.H."/>
            <person name="Holt I.E."/>
            <person name="Eidhammer I."/>
            <person name="Jonasen I."/>
            <person name="Vanaken S."/>
            <person name="Utterback T.R."/>
            <person name="Feldblyum T.V."/>
            <person name="Fraser C.M."/>
            <person name="Lillehaug J.R."/>
            <person name="Eisen J.A."/>
        </authorList>
    </citation>
    <scope>NUCLEOTIDE SEQUENCE [LARGE SCALE GENOMIC DNA]</scope>
    <source>
        <strain>ATCC 33009 / NCIMB 11132 / Bath</strain>
    </source>
</reference>
<sequence>MRLSEAWLRQYVNPMVDTAGLVRQLTMAGLEVDGAEPAAADFSGVVVARILEAAPHPEADRLQICRVDTGGGEPLQIVCGAANARAGLVAPLAMEGAVLPGPLKIKRSRLRGVESFGMLCSAKELGLEDDASGLLELPADAPVGADIRDYLQLDDRILEIDLTPNRADCLSVEGIAREVALINRLPFRGVDAGTVAVGSQRRLVVHLDAPEACPRYLGRVITGIDARAQTPRWMKERLRRSGLRSLGPAVDVTNYVLLELGQPLHAFDLERLSGDVHVRQARDGELLRLLNGEEITLSSDVLVIADEEKALALAGIMGGEQSAVGGATSDVFLECAFFAPALIMGKARRYGLATDSSHRFERGVDPSLQRRAIERATALLLEIAGGEAGPVTEAVREDLLPLRAPVRLREQRIGQLLGLNLPRDEVADILARLGMSVEEDEPGWTVTPPSFRFDIALEADLIEEIGRVYGYDAIPRRRPAVASAMQPASETVLGLDRVKDLLADRGYQEVITYSFVSAEMQRRIDPEAEPEALLNPISADLAVMRISLWTGLLDCAQKNLSRQQDRVRIFETGLKFVRRDGSLEQRNTLAGLVLGSILDEQWGEKSRRVDFFDVKSDVEAILGLTGKSSVRFRPAIHHALHPGQSAEILIGDGGAGWLGMLHPQIERELGFEQPVFMFELDAGALLQRDLPRFAPLSRFPLVRRDLALVVARDLPAADLLEAVAASGGPLVRDTVLFDVYSGAGVEAGKKSVALGVTLQDAEETLTDDRVDEVMSRIVARLAADFGAKLRE</sequence>
<organism>
    <name type="scientific">Methylococcus capsulatus (strain ATCC 33009 / NCIMB 11132 / Bath)</name>
    <dbReference type="NCBI Taxonomy" id="243233"/>
    <lineage>
        <taxon>Bacteria</taxon>
        <taxon>Pseudomonadati</taxon>
        <taxon>Pseudomonadota</taxon>
        <taxon>Gammaproteobacteria</taxon>
        <taxon>Methylococcales</taxon>
        <taxon>Methylococcaceae</taxon>
        <taxon>Methylococcus</taxon>
    </lineage>
</organism>
<name>SYFB_METCA</name>
<evidence type="ECO:0000255" key="1">
    <source>
        <dbReference type="HAMAP-Rule" id="MF_00283"/>
    </source>
</evidence>
<proteinExistence type="inferred from homology"/>
<accession>Q60AY9</accession>
<comment type="catalytic activity">
    <reaction evidence="1">
        <text>tRNA(Phe) + L-phenylalanine + ATP = L-phenylalanyl-tRNA(Phe) + AMP + diphosphate + H(+)</text>
        <dbReference type="Rhea" id="RHEA:19413"/>
        <dbReference type="Rhea" id="RHEA-COMP:9668"/>
        <dbReference type="Rhea" id="RHEA-COMP:9699"/>
        <dbReference type="ChEBI" id="CHEBI:15378"/>
        <dbReference type="ChEBI" id="CHEBI:30616"/>
        <dbReference type="ChEBI" id="CHEBI:33019"/>
        <dbReference type="ChEBI" id="CHEBI:58095"/>
        <dbReference type="ChEBI" id="CHEBI:78442"/>
        <dbReference type="ChEBI" id="CHEBI:78531"/>
        <dbReference type="ChEBI" id="CHEBI:456215"/>
        <dbReference type="EC" id="6.1.1.20"/>
    </reaction>
</comment>
<comment type="cofactor">
    <cofactor evidence="1">
        <name>Mg(2+)</name>
        <dbReference type="ChEBI" id="CHEBI:18420"/>
    </cofactor>
    <text evidence="1">Binds 2 magnesium ions per tetramer.</text>
</comment>
<comment type="subunit">
    <text evidence="1">Tetramer of two alpha and two beta subunits.</text>
</comment>
<comment type="subcellular location">
    <subcellularLocation>
        <location evidence="1">Cytoplasm</location>
    </subcellularLocation>
</comment>
<comment type="similarity">
    <text evidence="1">Belongs to the phenylalanyl-tRNA synthetase beta subunit family. Type 1 subfamily.</text>
</comment>
<gene>
    <name evidence="1" type="primary">pheT</name>
    <name type="ordered locus">MCA0698</name>
</gene>